<reference key="1">
    <citation type="journal article" date="1997" name="Biochim. Biophys. Acta">
        <title>Cloning, sequencing and overexpression of the gene encoding malate dehydrogenase from the deep-sea bacterium Photobacterium species strain SS9.</title>
        <authorList>
            <person name="Welch T.J."/>
            <person name="Bartlett D.H."/>
        </authorList>
    </citation>
    <scope>NUCLEOTIDE SEQUENCE [GENOMIC DNA]</scope>
</reference>
<reference key="2">
    <citation type="journal article" date="2005" name="Science">
        <title>Life at depth: Photobacterium profundum genome sequence and expression analysis.</title>
        <authorList>
            <person name="Vezzi A."/>
            <person name="Campanaro S."/>
            <person name="D'Angelo M."/>
            <person name="Simonato F."/>
            <person name="Vitulo N."/>
            <person name="Lauro F.M."/>
            <person name="Cestaro A."/>
            <person name="Malacrida G."/>
            <person name="Simionati B."/>
            <person name="Cannata N."/>
            <person name="Romualdi C."/>
            <person name="Bartlett D.H."/>
            <person name="Valle G."/>
        </authorList>
    </citation>
    <scope>NUCLEOTIDE SEQUENCE [LARGE SCALE GENOMIC DNA]</scope>
    <source>
        <strain>ATCC BAA-1253 / SS9</strain>
    </source>
</reference>
<evidence type="ECO:0000255" key="1">
    <source>
        <dbReference type="HAMAP-Rule" id="MF_01516"/>
    </source>
</evidence>
<evidence type="ECO:0000305" key="2"/>
<dbReference type="EC" id="1.1.1.37" evidence="1"/>
<dbReference type="EMBL" id="L13319">
    <property type="protein sequence ID" value="AAA25624.1"/>
    <property type="molecule type" value="Genomic_DNA"/>
</dbReference>
<dbReference type="EMBL" id="CR378664">
    <property type="protein sequence ID" value="CAG18823.1"/>
    <property type="molecule type" value="Genomic_DNA"/>
</dbReference>
<dbReference type="RefSeq" id="WP_011217182.1">
    <property type="nucleotide sequence ID" value="NC_006370.1"/>
</dbReference>
<dbReference type="SMR" id="P37226"/>
<dbReference type="STRING" id="298386.PBPRA0391"/>
<dbReference type="KEGG" id="ppr:PBPRA0391"/>
<dbReference type="eggNOG" id="COG0039">
    <property type="taxonomic scope" value="Bacteria"/>
</dbReference>
<dbReference type="HOGENOM" id="CLU_047181_1_0_6"/>
<dbReference type="Proteomes" id="UP000000593">
    <property type="component" value="Chromosome 1"/>
</dbReference>
<dbReference type="GO" id="GO:0005737">
    <property type="term" value="C:cytoplasm"/>
    <property type="evidence" value="ECO:0007669"/>
    <property type="project" value="TreeGrafter"/>
</dbReference>
<dbReference type="GO" id="GO:0030060">
    <property type="term" value="F:L-malate dehydrogenase (NAD+) activity"/>
    <property type="evidence" value="ECO:0007669"/>
    <property type="project" value="UniProtKB-UniRule"/>
</dbReference>
<dbReference type="GO" id="GO:0006108">
    <property type="term" value="P:malate metabolic process"/>
    <property type="evidence" value="ECO:0007669"/>
    <property type="project" value="InterPro"/>
</dbReference>
<dbReference type="GO" id="GO:0006099">
    <property type="term" value="P:tricarboxylic acid cycle"/>
    <property type="evidence" value="ECO:0007669"/>
    <property type="project" value="UniProtKB-UniRule"/>
</dbReference>
<dbReference type="CDD" id="cd01337">
    <property type="entry name" value="MDH_glyoxysomal_mitochondrial"/>
    <property type="match status" value="1"/>
</dbReference>
<dbReference type="FunFam" id="3.40.50.720:FF:000017">
    <property type="entry name" value="Malate dehydrogenase"/>
    <property type="match status" value="1"/>
</dbReference>
<dbReference type="FunFam" id="3.90.110.10:FF:000001">
    <property type="entry name" value="Malate dehydrogenase"/>
    <property type="match status" value="1"/>
</dbReference>
<dbReference type="Gene3D" id="3.90.110.10">
    <property type="entry name" value="Lactate dehydrogenase/glycoside hydrolase, family 4, C-terminal"/>
    <property type="match status" value="1"/>
</dbReference>
<dbReference type="Gene3D" id="3.40.50.720">
    <property type="entry name" value="NAD(P)-binding Rossmann-like Domain"/>
    <property type="match status" value="1"/>
</dbReference>
<dbReference type="HAMAP" id="MF_01516">
    <property type="entry name" value="Malate_dehydrog_1"/>
    <property type="match status" value="1"/>
</dbReference>
<dbReference type="InterPro" id="IPR001557">
    <property type="entry name" value="L-lactate/malate_DH"/>
</dbReference>
<dbReference type="InterPro" id="IPR022383">
    <property type="entry name" value="Lactate/malate_DH_C"/>
</dbReference>
<dbReference type="InterPro" id="IPR001236">
    <property type="entry name" value="Lactate/malate_DH_N"/>
</dbReference>
<dbReference type="InterPro" id="IPR015955">
    <property type="entry name" value="Lactate_DH/Glyco_Ohase_4_C"/>
</dbReference>
<dbReference type="InterPro" id="IPR001252">
    <property type="entry name" value="Malate_DH_AS"/>
</dbReference>
<dbReference type="InterPro" id="IPR010097">
    <property type="entry name" value="Malate_DH_type1"/>
</dbReference>
<dbReference type="InterPro" id="IPR023958">
    <property type="entry name" value="Malate_DH_type1_bac"/>
</dbReference>
<dbReference type="InterPro" id="IPR036291">
    <property type="entry name" value="NAD(P)-bd_dom_sf"/>
</dbReference>
<dbReference type="NCBIfam" id="TIGR01772">
    <property type="entry name" value="MDH_euk_gproteo"/>
    <property type="match status" value="1"/>
</dbReference>
<dbReference type="PANTHER" id="PTHR11540">
    <property type="entry name" value="MALATE AND LACTATE DEHYDROGENASE"/>
    <property type="match status" value="1"/>
</dbReference>
<dbReference type="PANTHER" id="PTHR11540:SF16">
    <property type="entry name" value="MALATE DEHYDROGENASE, MITOCHONDRIAL"/>
    <property type="match status" value="1"/>
</dbReference>
<dbReference type="Pfam" id="PF02866">
    <property type="entry name" value="Ldh_1_C"/>
    <property type="match status" value="1"/>
</dbReference>
<dbReference type="Pfam" id="PF00056">
    <property type="entry name" value="Ldh_1_N"/>
    <property type="match status" value="1"/>
</dbReference>
<dbReference type="PIRSF" id="PIRSF000102">
    <property type="entry name" value="Lac_mal_DH"/>
    <property type="match status" value="1"/>
</dbReference>
<dbReference type="SUPFAM" id="SSF56327">
    <property type="entry name" value="LDH C-terminal domain-like"/>
    <property type="match status" value="1"/>
</dbReference>
<dbReference type="SUPFAM" id="SSF51735">
    <property type="entry name" value="NAD(P)-binding Rossmann-fold domains"/>
    <property type="match status" value="1"/>
</dbReference>
<dbReference type="PROSITE" id="PS00068">
    <property type="entry name" value="MDH"/>
    <property type="match status" value="1"/>
</dbReference>
<sequence length="312" mass="32293">MKVAVIGAAGGIGQALALLLKNGLPAGSDLALYDIAPVTPGVAADLSHIPTPVSIKGYGGVDPTPALEGADVVLISAGVARKPGMDRSDLFNVNAGIIKSLAEKIAVVCPKACVGIITNPVNTTVAIAADVLKKAGVYDKRRLFGITTLDIIRSETFVAELKGKTPSDIQVPVIGGHSGVTILPLLSQVEGVEFSDEEIKALTPRIQNAGTEVVEAKAGGGSATLSMGQAAYRFGLSLVRALQGEQGIVECAYVEGDGKHARFFAQPVLLGKDGVEEVIDYGKLSTFEQEALNNMLDTLTSDITLGEEFAAK</sequence>
<proteinExistence type="inferred from homology"/>
<feature type="chain" id="PRO_0000113320" description="Malate dehydrogenase">
    <location>
        <begin position="1"/>
        <end position="312"/>
    </location>
</feature>
<feature type="active site" description="Proton acceptor" evidence="1">
    <location>
        <position position="177"/>
    </location>
</feature>
<feature type="binding site" evidence="1">
    <location>
        <begin position="7"/>
        <end position="13"/>
    </location>
    <ligand>
        <name>NAD(+)</name>
        <dbReference type="ChEBI" id="CHEBI:57540"/>
    </ligand>
</feature>
<feature type="binding site" evidence="1">
    <location>
        <position position="34"/>
    </location>
    <ligand>
        <name>NAD(+)</name>
        <dbReference type="ChEBI" id="CHEBI:57540"/>
    </ligand>
</feature>
<feature type="binding site" evidence="1">
    <location>
        <position position="81"/>
    </location>
    <ligand>
        <name>substrate</name>
    </ligand>
</feature>
<feature type="binding site" evidence="1">
    <location>
        <position position="87"/>
    </location>
    <ligand>
        <name>substrate</name>
    </ligand>
</feature>
<feature type="binding site" evidence="1">
    <location>
        <position position="94"/>
    </location>
    <ligand>
        <name>NAD(+)</name>
        <dbReference type="ChEBI" id="CHEBI:57540"/>
    </ligand>
</feature>
<feature type="binding site" evidence="1">
    <location>
        <begin position="117"/>
        <end position="119"/>
    </location>
    <ligand>
        <name>NAD(+)</name>
        <dbReference type="ChEBI" id="CHEBI:57540"/>
    </ligand>
</feature>
<feature type="binding site" evidence="1">
    <location>
        <position position="119"/>
    </location>
    <ligand>
        <name>substrate</name>
    </ligand>
</feature>
<feature type="binding site" evidence="1">
    <location>
        <position position="153"/>
    </location>
    <ligand>
        <name>substrate</name>
    </ligand>
</feature>
<feature type="binding site" evidence="1">
    <location>
        <position position="227"/>
    </location>
    <ligand>
        <name>NAD(+)</name>
        <dbReference type="ChEBI" id="CHEBI:57540"/>
    </ligand>
</feature>
<feature type="sequence conflict" description="In Ref. 1; AAA25624." evidence="2" ref="1">
    <original>DI</original>
    <variation>EL</variation>
    <location>
        <begin position="168"/>
        <end position="169"/>
    </location>
</feature>
<feature type="sequence conflict" description="In Ref. 1; AAA25624." evidence="2" ref="1">
    <original>A</original>
    <variation>R</variation>
    <location>
        <position position="218"/>
    </location>
</feature>
<feature type="sequence conflict" description="In Ref. 1; AAA25624." evidence="2" ref="1">
    <original>E</original>
    <variation>Q</variation>
    <location>
        <position position="245"/>
    </location>
</feature>
<gene>
    <name evidence="1" type="primary">mdh</name>
    <name type="ordered locus">PBPRA0391</name>
</gene>
<keyword id="KW-0520">NAD</keyword>
<keyword id="KW-0560">Oxidoreductase</keyword>
<keyword id="KW-1185">Reference proteome</keyword>
<keyword id="KW-0816">Tricarboxylic acid cycle</keyword>
<name>MDH_PHOPR</name>
<comment type="function">
    <text evidence="1">Catalyzes the reversible oxidation of malate to oxaloacetate.</text>
</comment>
<comment type="catalytic activity">
    <reaction evidence="1">
        <text>(S)-malate + NAD(+) = oxaloacetate + NADH + H(+)</text>
        <dbReference type="Rhea" id="RHEA:21432"/>
        <dbReference type="ChEBI" id="CHEBI:15378"/>
        <dbReference type="ChEBI" id="CHEBI:15589"/>
        <dbReference type="ChEBI" id="CHEBI:16452"/>
        <dbReference type="ChEBI" id="CHEBI:57540"/>
        <dbReference type="ChEBI" id="CHEBI:57945"/>
        <dbReference type="EC" id="1.1.1.37"/>
    </reaction>
</comment>
<comment type="subunit">
    <text evidence="1">Homodimer.</text>
</comment>
<comment type="similarity">
    <text evidence="1">Belongs to the LDH/MDH superfamily. MDH type 1 family.</text>
</comment>
<accession>P37226</accession>
<organism>
    <name type="scientific">Photobacterium profundum (strain SS9)</name>
    <dbReference type="NCBI Taxonomy" id="298386"/>
    <lineage>
        <taxon>Bacteria</taxon>
        <taxon>Pseudomonadati</taxon>
        <taxon>Pseudomonadota</taxon>
        <taxon>Gammaproteobacteria</taxon>
        <taxon>Vibrionales</taxon>
        <taxon>Vibrionaceae</taxon>
        <taxon>Photobacterium</taxon>
    </lineage>
</organism>
<protein>
    <recommendedName>
        <fullName evidence="1">Malate dehydrogenase</fullName>
        <ecNumber evidence="1">1.1.1.37</ecNumber>
    </recommendedName>
</protein>